<feature type="chain" id="PRO_0000051014" description="Histone acetyltransferase type B subunit 2">
    <location>
        <begin position="1"/>
        <end position="401"/>
    </location>
</feature>
<feature type="repeat" description="WD 1">
    <location>
        <begin position="116"/>
        <end position="147"/>
    </location>
</feature>
<feature type="repeat" description="WD 2">
    <location>
        <begin position="158"/>
        <end position="189"/>
    </location>
</feature>
<feature type="repeat" description="WD 3">
    <location>
        <begin position="206"/>
        <end position="237"/>
    </location>
</feature>
<feature type="repeat" description="WD 4">
    <location>
        <begin position="249"/>
        <end position="280"/>
    </location>
</feature>
<feature type="repeat" description="WD 5">
    <location>
        <begin position="293"/>
        <end position="324"/>
    </location>
</feature>
<feature type="repeat" description="WD 6">
    <location>
        <begin position="350"/>
        <end position="381"/>
    </location>
</feature>
<feature type="region of interest" description="Interaction with the histone H4 N-terminus" evidence="6">
    <location>
        <begin position="335"/>
        <end position="339"/>
    </location>
</feature>
<feature type="site" description="Important for interaction with HAT1" evidence="6">
    <location>
        <position position="266"/>
    </location>
</feature>
<feature type="mutagenesis site" description="Abolishes interaction with HAT1." evidence="6">
    <original>L</original>
    <variation>E</variation>
    <location>
        <position position="266"/>
    </location>
</feature>
<feature type="helix" evidence="9">
    <location>
        <begin position="10"/>
        <end position="24"/>
    </location>
</feature>
<feature type="strand" evidence="9">
    <location>
        <begin position="25"/>
        <end position="32"/>
    </location>
</feature>
<feature type="strand" evidence="9">
    <location>
        <begin position="40"/>
        <end position="42"/>
    </location>
</feature>
<feature type="strand" evidence="10">
    <location>
        <begin position="48"/>
        <end position="50"/>
    </location>
</feature>
<feature type="strand" evidence="9">
    <location>
        <begin position="53"/>
        <end position="62"/>
    </location>
</feature>
<feature type="strand" evidence="9">
    <location>
        <begin position="71"/>
        <end position="81"/>
    </location>
</feature>
<feature type="helix" evidence="9">
    <location>
        <begin position="82"/>
        <end position="85"/>
    </location>
</feature>
<feature type="strand" evidence="9">
    <location>
        <begin position="108"/>
        <end position="119"/>
    </location>
</feature>
<feature type="strand" evidence="9">
    <location>
        <begin position="121"/>
        <end position="127"/>
    </location>
</feature>
<feature type="strand" evidence="9">
    <location>
        <begin position="130"/>
        <end position="138"/>
    </location>
</feature>
<feature type="strand" evidence="9">
    <location>
        <begin position="143"/>
        <end position="147"/>
    </location>
</feature>
<feature type="turn" evidence="9">
    <location>
        <begin position="148"/>
        <end position="150"/>
    </location>
</feature>
<feature type="strand" evidence="9">
    <location>
        <begin position="151"/>
        <end position="156"/>
    </location>
</feature>
<feature type="strand" evidence="9">
    <location>
        <begin position="165"/>
        <end position="168"/>
    </location>
</feature>
<feature type="strand" evidence="9">
    <location>
        <begin position="170"/>
        <end position="172"/>
    </location>
</feature>
<feature type="strand" evidence="9">
    <location>
        <begin position="175"/>
        <end position="179"/>
    </location>
</feature>
<feature type="strand" evidence="9">
    <location>
        <begin position="185"/>
        <end position="189"/>
    </location>
</feature>
<feature type="strand" evidence="9">
    <location>
        <begin position="191"/>
        <end position="194"/>
    </location>
</feature>
<feature type="strand" evidence="9">
    <location>
        <begin position="200"/>
        <end position="206"/>
    </location>
</feature>
<feature type="strand" evidence="9">
    <location>
        <begin position="211"/>
        <end position="216"/>
    </location>
</feature>
<feature type="strand" evidence="9">
    <location>
        <begin position="223"/>
        <end position="228"/>
    </location>
</feature>
<feature type="strand" evidence="9">
    <location>
        <begin position="231"/>
        <end position="237"/>
    </location>
</feature>
<feature type="strand" evidence="9">
    <location>
        <begin position="244"/>
        <end position="249"/>
    </location>
</feature>
<feature type="strand" evidence="9">
    <location>
        <begin position="254"/>
        <end position="259"/>
    </location>
</feature>
<feature type="strand" evidence="9">
    <location>
        <begin position="264"/>
        <end position="271"/>
    </location>
</feature>
<feature type="strand" evidence="9">
    <location>
        <begin position="276"/>
        <end position="280"/>
    </location>
</feature>
<feature type="strand" evidence="9">
    <location>
        <begin position="288"/>
        <end position="291"/>
    </location>
</feature>
<feature type="strand" evidence="9">
    <location>
        <begin position="298"/>
        <end position="303"/>
    </location>
</feature>
<feature type="strand" evidence="9">
    <location>
        <begin position="305"/>
        <end position="307"/>
    </location>
</feature>
<feature type="strand" evidence="9">
    <location>
        <begin position="310"/>
        <end position="315"/>
    </location>
</feature>
<feature type="strand" evidence="9">
    <location>
        <begin position="320"/>
        <end position="324"/>
    </location>
</feature>
<feature type="helix" evidence="9">
    <location>
        <begin position="325"/>
        <end position="327"/>
    </location>
</feature>
<feature type="helix" evidence="9">
    <location>
        <begin position="334"/>
        <end position="337"/>
    </location>
</feature>
<feature type="strand" evidence="9">
    <location>
        <begin position="344"/>
        <end position="348"/>
    </location>
</feature>
<feature type="strand" evidence="9">
    <location>
        <begin position="355"/>
        <end position="360"/>
    </location>
</feature>
<feature type="strand" evidence="9">
    <location>
        <begin position="362"/>
        <end position="364"/>
    </location>
</feature>
<feature type="strand" evidence="9">
    <location>
        <begin position="367"/>
        <end position="372"/>
    </location>
</feature>
<feature type="strand" evidence="9">
    <location>
        <begin position="375"/>
        <end position="382"/>
    </location>
</feature>
<feature type="turn" evidence="9">
    <location>
        <begin position="387"/>
        <end position="389"/>
    </location>
</feature>
<evidence type="ECO:0000269" key="1">
    <source>
    </source>
</evidence>
<evidence type="ECO:0000269" key="2">
    <source>
    </source>
</evidence>
<evidence type="ECO:0000269" key="3">
    <source>
    </source>
</evidence>
<evidence type="ECO:0000269" key="4">
    <source>
    </source>
</evidence>
<evidence type="ECO:0000269" key="5">
    <source>
    </source>
</evidence>
<evidence type="ECO:0000269" key="6">
    <source>
    </source>
</evidence>
<evidence type="ECO:0000269" key="7">
    <source>
    </source>
</evidence>
<evidence type="ECO:0000305" key="8"/>
<evidence type="ECO:0007829" key="9">
    <source>
        <dbReference type="PDB" id="4PSW"/>
    </source>
</evidence>
<evidence type="ECO:0007829" key="10">
    <source>
        <dbReference type="PDB" id="4PSX"/>
    </source>
</evidence>
<keyword id="KW-0002">3D-structure</keyword>
<keyword id="KW-0156">Chromatin regulator</keyword>
<keyword id="KW-0963">Cytoplasm</keyword>
<keyword id="KW-0903">Direct protein sequencing</keyword>
<keyword id="KW-0539">Nucleus</keyword>
<keyword id="KW-1185">Reference proteome</keyword>
<keyword id="KW-0677">Repeat</keyword>
<keyword id="KW-0853">WD repeat</keyword>
<dbReference type="EMBL" id="U18795">
    <property type="protein sequence ID" value="AAB65031.1"/>
    <property type="molecule type" value="Genomic_DNA"/>
</dbReference>
<dbReference type="EMBL" id="BK006939">
    <property type="protein sequence ID" value="DAA07598.1"/>
    <property type="molecule type" value="Genomic_DNA"/>
</dbReference>
<dbReference type="PIR" id="S50533">
    <property type="entry name" value="S50533"/>
</dbReference>
<dbReference type="RefSeq" id="NP_010858.3">
    <property type="nucleotide sequence ID" value="NM_001178871.3"/>
</dbReference>
<dbReference type="PDB" id="4PSW">
    <property type="method" value="X-ray"/>
    <property type="resolution" value="2.10 A"/>
    <property type="chains" value="B=7-390"/>
</dbReference>
<dbReference type="PDB" id="4PSX">
    <property type="method" value="X-ray"/>
    <property type="resolution" value="2.51 A"/>
    <property type="chains" value="B/E=8-389"/>
</dbReference>
<dbReference type="PDB" id="7XAY">
    <property type="method" value="X-ray"/>
    <property type="resolution" value="3.30 A"/>
    <property type="chains" value="B=1-401"/>
</dbReference>
<dbReference type="PDBsum" id="4PSW"/>
<dbReference type="PDBsum" id="4PSX"/>
<dbReference type="PDBsum" id="7XAY"/>
<dbReference type="SMR" id="P39984"/>
<dbReference type="BioGRID" id="36673">
    <property type="interactions" value="86"/>
</dbReference>
<dbReference type="ComplexPortal" id="CPX-1682">
    <property type="entry name" value="Histone acetyltransferase B"/>
</dbReference>
<dbReference type="DIP" id="DIP-2363N"/>
<dbReference type="FunCoup" id="P39984">
    <property type="interactions" value="1297"/>
</dbReference>
<dbReference type="IntAct" id="P39984">
    <property type="interactions" value="27"/>
</dbReference>
<dbReference type="MINT" id="P39984"/>
<dbReference type="STRING" id="4932.YEL056W"/>
<dbReference type="iPTMnet" id="P39984"/>
<dbReference type="PaxDb" id="4932-YEL056W"/>
<dbReference type="PeptideAtlas" id="P39984"/>
<dbReference type="EnsemblFungi" id="YEL056W_mRNA">
    <property type="protein sequence ID" value="YEL056W"/>
    <property type="gene ID" value="YEL056W"/>
</dbReference>
<dbReference type="GeneID" id="856654"/>
<dbReference type="KEGG" id="sce:YEL056W"/>
<dbReference type="AGR" id="SGD:S000000782"/>
<dbReference type="SGD" id="S000000782">
    <property type="gene designation" value="HAT2"/>
</dbReference>
<dbReference type="VEuPathDB" id="FungiDB:YEL056W"/>
<dbReference type="eggNOG" id="KOG0264">
    <property type="taxonomic scope" value="Eukaryota"/>
</dbReference>
<dbReference type="GeneTree" id="ENSGT00940000176625"/>
<dbReference type="HOGENOM" id="CLU_020445_3_1_1"/>
<dbReference type="InParanoid" id="P39984"/>
<dbReference type="OMA" id="PHEEGCL"/>
<dbReference type="OrthoDB" id="427795at2759"/>
<dbReference type="BioCyc" id="YEAST:G3O-30174-MONOMER"/>
<dbReference type="Reactome" id="R-SCE-3214815">
    <property type="pathway name" value="HDACs deacetylate histones"/>
</dbReference>
<dbReference type="Reactome" id="R-SCE-3214847">
    <property type="pathway name" value="HATs acetylate histones"/>
</dbReference>
<dbReference type="Reactome" id="R-SCE-3214858">
    <property type="pathway name" value="RMTs methylate histone arginines"/>
</dbReference>
<dbReference type="BioGRID-ORCS" id="856654">
    <property type="hits" value="0 hits in 10 CRISPR screens"/>
</dbReference>
<dbReference type="EvolutionaryTrace" id="P39984"/>
<dbReference type="PRO" id="PR:P39984"/>
<dbReference type="Proteomes" id="UP000002311">
    <property type="component" value="Chromosome V"/>
</dbReference>
<dbReference type="RNAct" id="P39984">
    <property type="molecule type" value="protein"/>
</dbReference>
<dbReference type="GO" id="GO:0000781">
    <property type="term" value="C:chromosome, telomeric region"/>
    <property type="evidence" value="ECO:0007669"/>
    <property type="project" value="GOC"/>
</dbReference>
<dbReference type="GO" id="GO:0005737">
    <property type="term" value="C:cytoplasm"/>
    <property type="evidence" value="ECO:0000314"/>
    <property type="project" value="SGD"/>
</dbReference>
<dbReference type="GO" id="GO:0000123">
    <property type="term" value="C:histone acetyltransferase complex"/>
    <property type="evidence" value="ECO:0000314"/>
    <property type="project" value="SGD"/>
</dbReference>
<dbReference type="GO" id="GO:0005634">
    <property type="term" value="C:nucleus"/>
    <property type="evidence" value="ECO:0000314"/>
    <property type="project" value="ComplexPortal"/>
</dbReference>
<dbReference type="GO" id="GO:0033698">
    <property type="term" value="C:Rpd3L complex"/>
    <property type="evidence" value="ECO:0000318"/>
    <property type="project" value="GO_Central"/>
</dbReference>
<dbReference type="GO" id="GO:0070210">
    <property type="term" value="C:Rpd3L-Expanded complex"/>
    <property type="evidence" value="ECO:0000318"/>
    <property type="project" value="GO_Central"/>
</dbReference>
<dbReference type="GO" id="GO:0042393">
    <property type="term" value="F:histone binding"/>
    <property type="evidence" value="ECO:0000314"/>
    <property type="project" value="SGD"/>
</dbReference>
<dbReference type="GO" id="GO:0006325">
    <property type="term" value="P:chromatin organization"/>
    <property type="evidence" value="ECO:0000314"/>
    <property type="project" value="SGD"/>
</dbReference>
<dbReference type="GO" id="GO:0006338">
    <property type="term" value="P:chromatin remodeling"/>
    <property type="evidence" value="ECO:0000318"/>
    <property type="project" value="GO_Central"/>
</dbReference>
<dbReference type="GO" id="GO:0006355">
    <property type="term" value="P:regulation of DNA-templated transcription"/>
    <property type="evidence" value="ECO:0000318"/>
    <property type="project" value="GO_Central"/>
</dbReference>
<dbReference type="GO" id="GO:0031509">
    <property type="term" value="P:subtelomeric heterochromatin formation"/>
    <property type="evidence" value="ECO:0000314"/>
    <property type="project" value="ComplexPortal"/>
</dbReference>
<dbReference type="FunFam" id="2.130.10.10:FF:001172">
    <property type="entry name" value="Histone acetyltransferase subunit"/>
    <property type="match status" value="1"/>
</dbReference>
<dbReference type="Gene3D" id="2.130.10.10">
    <property type="entry name" value="YVTN repeat-like/Quinoprotein amine dehydrogenase"/>
    <property type="match status" value="1"/>
</dbReference>
<dbReference type="InterPro" id="IPR022052">
    <property type="entry name" value="Histone-bd_RBBP4-like_N"/>
</dbReference>
<dbReference type="InterPro" id="IPR015943">
    <property type="entry name" value="WD40/YVTN_repeat-like_dom_sf"/>
</dbReference>
<dbReference type="InterPro" id="IPR019775">
    <property type="entry name" value="WD40_repeat_CS"/>
</dbReference>
<dbReference type="InterPro" id="IPR036322">
    <property type="entry name" value="WD40_repeat_dom_sf"/>
</dbReference>
<dbReference type="InterPro" id="IPR001680">
    <property type="entry name" value="WD40_rpt"/>
</dbReference>
<dbReference type="InterPro" id="IPR050459">
    <property type="entry name" value="WD_repeat_RBAP46/RBAP48/MSI1"/>
</dbReference>
<dbReference type="PANTHER" id="PTHR22850">
    <property type="entry name" value="WD40 REPEAT FAMILY"/>
    <property type="match status" value="1"/>
</dbReference>
<dbReference type="Pfam" id="PF12265">
    <property type="entry name" value="CAF1C_H4-bd"/>
    <property type="match status" value="1"/>
</dbReference>
<dbReference type="Pfam" id="PF00400">
    <property type="entry name" value="WD40"/>
    <property type="match status" value="2"/>
</dbReference>
<dbReference type="SMART" id="SM00320">
    <property type="entry name" value="WD40"/>
    <property type="match status" value="6"/>
</dbReference>
<dbReference type="SUPFAM" id="SSF50978">
    <property type="entry name" value="WD40 repeat-like"/>
    <property type="match status" value="1"/>
</dbReference>
<dbReference type="PROSITE" id="PS00678">
    <property type="entry name" value="WD_REPEATS_1"/>
    <property type="match status" value="2"/>
</dbReference>
<dbReference type="PROSITE" id="PS50082">
    <property type="entry name" value="WD_REPEATS_2"/>
    <property type="match status" value="2"/>
</dbReference>
<dbReference type="PROSITE" id="PS50294">
    <property type="entry name" value="WD_REPEATS_REGION"/>
    <property type="match status" value="1"/>
</dbReference>
<accession>P39984</accession>
<accession>D3DLJ4</accession>
<name>HAT2_YEAST</name>
<gene>
    <name type="primary">HAT2</name>
    <name type="ordered locus">YEL056W</name>
</gene>
<organism>
    <name type="scientific">Saccharomyces cerevisiae (strain ATCC 204508 / S288c)</name>
    <name type="common">Baker's yeast</name>
    <dbReference type="NCBI Taxonomy" id="559292"/>
    <lineage>
        <taxon>Eukaryota</taxon>
        <taxon>Fungi</taxon>
        <taxon>Dikarya</taxon>
        <taxon>Ascomycota</taxon>
        <taxon>Saccharomycotina</taxon>
        <taxon>Saccharomycetes</taxon>
        <taxon>Saccharomycetales</taxon>
        <taxon>Saccharomycetaceae</taxon>
        <taxon>Saccharomyces</taxon>
    </lineage>
</organism>
<reference key="1">
    <citation type="journal article" date="1996" name="Cell">
        <title>The major cytoplasmic histone acetyltransferase in yeast: links to chromatin replication and histone metabolism.</title>
        <authorList>
            <person name="Parthun M.R."/>
            <person name="Widom J."/>
            <person name="Gottschling D.E."/>
        </authorList>
    </citation>
    <scope>NUCLEOTIDE SEQUENCE [GENOMIC DNA]</scope>
    <scope>PROTEIN SEQUENCE OF 83-105</scope>
    <scope>ACETYLATION OF HISTONE H4</scope>
    <scope>INTERACTION WITH HAT1 AND HISTONE H4</scope>
</reference>
<reference key="2">
    <citation type="journal article" date="1997" name="Nature">
        <title>The nucleotide sequence of Saccharomyces cerevisiae chromosome V.</title>
        <authorList>
            <person name="Dietrich F.S."/>
            <person name="Mulligan J.T."/>
            <person name="Hennessy K.M."/>
            <person name="Yelton M.A."/>
            <person name="Allen E."/>
            <person name="Araujo R."/>
            <person name="Aviles E."/>
            <person name="Berno A."/>
            <person name="Brennan T."/>
            <person name="Carpenter J."/>
            <person name="Chen E."/>
            <person name="Cherry J.M."/>
            <person name="Chung E."/>
            <person name="Duncan M."/>
            <person name="Guzman E."/>
            <person name="Hartzell G."/>
            <person name="Hunicke-Smith S."/>
            <person name="Hyman R.W."/>
            <person name="Kayser A."/>
            <person name="Komp C."/>
            <person name="Lashkari D."/>
            <person name="Lew H."/>
            <person name="Lin D."/>
            <person name="Mosedale D."/>
            <person name="Nakahara K."/>
            <person name="Namath A."/>
            <person name="Norgren R."/>
            <person name="Oefner P."/>
            <person name="Oh C."/>
            <person name="Petel F.X."/>
            <person name="Roberts D."/>
            <person name="Sehl P."/>
            <person name="Schramm S."/>
            <person name="Shogren T."/>
            <person name="Smith V."/>
            <person name="Taylor P."/>
            <person name="Wei Y."/>
            <person name="Botstein D."/>
            <person name="Davis R.W."/>
        </authorList>
    </citation>
    <scope>NUCLEOTIDE SEQUENCE [LARGE SCALE GENOMIC DNA]</scope>
    <source>
        <strain>ATCC 204508 / S288c</strain>
    </source>
</reference>
<reference key="3">
    <citation type="journal article" date="2014" name="G3 (Bethesda)">
        <title>The reference genome sequence of Saccharomyces cerevisiae: Then and now.</title>
        <authorList>
            <person name="Engel S.R."/>
            <person name="Dietrich F.S."/>
            <person name="Fisk D.G."/>
            <person name="Binkley G."/>
            <person name="Balakrishnan R."/>
            <person name="Costanzo M.C."/>
            <person name="Dwight S.S."/>
            <person name="Hitz B.C."/>
            <person name="Karra K."/>
            <person name="Nash R.S."/>
            <person name="Weng S."/>
            <person name="Wong E.D."/>
            <person name="Lloyd P."/>
            <person name="Skrzypek M.S."/>
            <person name="Miyasato S.R."/>
            <person name="Simison M."/>
            <person name="Cherry J.M."/>
        </authorList>
    </citation>
    <scope>GENOME REANNOTATION</scope>
    <source>
        <strain>ATCC 204508 / S288c</strain>
    </source>
</reference>
<reference key="4">
    <citation type="journal article" date="1998" name="J. Biol. Chem.">
        <title>HAT1 and HAT2 proteins are components of a yeast nuclear histone acetyltransferase enzyme specific for free histone H4.</title>
        <authorList>
            <person name="Ruiz-Garcia A.B."/>
            <person name="Sendra R."/>
            <person name="Galiana M."/>
            <person name="Pamblanco M."/>
            <person name="Perez-Ortin J.E."/>
            <person name="Tordera V."/>
        </authorList>
    </citation>
    <scope>ACETYLATION OF HISTONE H4 BY THE HAT-B COMPLEX</scope>
</reference>
<reference key="5">
    <citation type="journal article" date="1999" name="Microbiology">
        <title>Farnesol-induced growth inhibition in Saccharomyces cerevisiae by a cell cycle mechanism.</title>
        <authorList>
            <person name="Machida K."/>
            <person name="Tanaka T."/>
            <person name="Yano Y."/>
            <person name="Otani S."/>
            <person name="Taniguchi M."/>
        </authorList>
    </citation>
    <scope>INDUCTION</scope>
</reference>
<reference key="6">
    <citation type="journal article" date="2000" name="Mol. Cell. Biol.">
        <title>Type B histone acetyltransferase Hat1p participates in telomeric silencing.</title>
        <authorList>
            <person name="Kelly T.J."/>
            <person name="Qin S."/>
            <person name="Gottschling D.E."/>
            <person name="Parthun M.R."/>
        </authorList>
    </citation>
    <scope>FUNCTION</scope>
    <scope>ACETYLATION OF HISTONE H4</scope>
</reference>
<reference key="7">
    <citation type="journal article" date="2004" name="J. Biol. Chem.">
        <title>Hif1 is a component of yeast histone acetyltransferase B, a complex mainly localized in the nucleus.</title>
        <authorList>
            <person name="Poveda A."/>
            <person name="Pamblanco M."/>
            <person name="Tafrov S."/>
            <person name="Tordera V."/>
            <person name="Sternglanz R."/>
            <person name="Sendra R."/>
        </authorList>
    </citation>
    <scope>IDENTIFICATION IN THE HAT-B COMPLEX</scope>
    <scope>FUNCTION OF THE HAT-B COMPLEX</scope>
    <scope>INTERACTION WITH HISTONE H4</scope>
    <scope>SUBCELLULAR LOCATION</scope>
</reference>
<reference key="8">
    <citation type="journal article" date="2004" name="Mol. Cell">
        <title>The nuclear Hat1p/Hat2p complex: a molecular link between type B histone acetyltransferases and chromatin assembly.</title>
        <authorList>
            <person name="Ai X."/>
            <person name="Parthun M.R."/>
        </authorList>
    </citation>
    <scope>FUNCTION</scope>
    <scope>IDENTIFICATION IN THE HAT-B COMPLEX</scope>
    <scope>IDENTIFICATION BY MASS SPECTROMETRY</scope>
    <scope>INTERACTION WITH HISTONES H3 AND H4</scope>
    <scope>SUBCELLULAR LOCATION</scope>
</reference>
<reference key="9">
    <citation type="journal article" date="2005" name="FEBS Lett.">
        <title>Yeast HAT1 and HAT2 deletions have different life-span and transcriptome phenotypes.</title>
        <authorList>
            <person name="Rosaleny L.E."/>
            <person name="Antunez O."/>
            <person name="Ruiz-Garcia A.B."/>
            <person name="Perez-Ortin J.E."/>
            <person name="Tordera V."/>
        </authorList>
    </citation>
    <scope>FUNCTION</scope>
</reference>
<reference key="10">
    <citation type="journal article" date="2014" name="Genes Dev.">
        <title>Hat2p recognizes the histone H3 tail to specify the acetylation of the newly synthesized H3/H4 heterodimer by the Hat1p/Hat2p complex.</title>
        <authorList>
            <person name="Li Y."/>
            <person name="Zhang L."/>
            <person name="Liu T."/>
            <person name="Chai C."/>
            <person name="Fang Q."/>
            <person name="Wu H."/>
            <person name="Agudelo Garcia P.A."/>
            <person name="Han Z."/>
            <person name="Zong S."/>
            <person name="Yu Y."/>
            <person name="Zhang X."/>
            <person name="Parthun M.R."/>
            <person name="Chai J."/>
            <person name="Xu R.M."/>
            <person name="Yang M."/>
        </authorList>
    </citation>
    <scope>X-RAY CRYSTALLOGRAPHY (2.10 ANGSTROMS) OF 7-390 IN COMPLEXES WITH HAT1 AND HISTONE PEPTIDES</scope>
    <scope>INTERACTION WITH HAT1 AND HISTONES H3 AND H4</scope>
    <scope>SUBUNIT</scope>
    <scope>FUNCTION</scope>
    <scope>MUTAGENESIS OF LEU-266</scope>
</reference>
<comment type="function">
    <text evidence="2 3 4 5 6">Regulatory subunit of the histone acetylase B (HAT-B) complex. The complex acetylates 'Lys-12' of histone H4 which is required for telomeric silencing. HAT2 is required for high affinity binding of the acetyltransferase to histone H4, for the nuclear location of HAT1 and for the HAT1-HIF1 interaction. Alone, it is unable to bind to H4, requiring HAT1 for high affinity interaction with the histone tail. HAT2 also has a HAT1 independent function in life-span regulation.</text>
</comment>
<comment type="subunit">
    <text evidence="3 4 6 7">Component of the HAT-B complex composed of at least HAT1 and HAT2. In the cytoplasm, this complex binds to the histone H4 tail. In the nucleus, the HAT-B complex has an additional component, the histone H3/H4 chaperone HIF1.</text>
</comment>
<comment type="interaction">
    <interactant intactId="EBI-8185">
        <id>P39984</id>
    </interactant>
    <interactant intactId="EBI-8176">
        <id>Q12341</id>
        <label>HAT1</label>
    </interactant>
    <organismsDiffer>false</organismsDiffer>
    <experiments>5</experiments>
</comment>
<comment type="interaction">
    <interactant intactId="EBI-8185">
        <id>P39984</id>
    </interactant>
    <interactant intactId="EBI-31911">
        <id>Q12373</id>
        <label>HIF1</label>
    </interactant>
    <organismsDiffer>false</organismsDiffer>
    <experiments>5</experiments>
</comment>
<comment type="subcellular location">
    <subcellularLocation>
        <location>Cytoplasm</location>
    </subcellularLocation>
    <subcellularLocation>
        <location>Nucleus</location>
    </subcellularLocation>
    <text>The nuclear location requires the presence of HAT2.</text>
</comment>
<comment type="induction">
    <text evidence="1">Repressed in presence of farnesol, probably through a intracellular decrease of diacylglycerol.</text>
</comment>
<comment type="similarity">
    <text evidence="8">Belongs to the WD repeat RBAP46/RBAP48/MSI1 family.</text>
</comment>
<protein>
    <recommendedName>
        <fullName>Histone acetyltransferase type B subunit 2</fullName>
    </recommendedName>
</protein>
<proteinExistence type="evidence at protein level"/>
<sequence length="401" mass="45060">MENQEKPLSVDEEYDLWKSNVPLMYDFVSETRLTWPSLTVQWLPTPVQELDGGFIKQELIIGTHTSGEEENYLKFAEINLPKEILSNEDPQEEAGEEYQSSLPAPRSNIRITAKYEHEEEITRARYMPQDPNIVATINGQGTVFLYSRSEGLQSTLKFHKDNGYALSFSTLVKGRLLSGSDDHTVALWEVGSGGDPTKPVRTWNDLHSDIINDNKWHNFNKDLFGTVSEDSLLKINDVRANNTTIDTVKCPQPFNTLAFSHHSSNLLAAAGMDSYVYLYDLRNMKEPLHHMSGHEDAVNNLEFSTHVDGVVVSSGSDNRLMMWDLKQIGAEQTPDDAEDGVPELIMVHAGHRSSVNDFDLNPQIPWLVASAEEENILQVWKCSHSLPIVGGPPKVNKDIIS</sequence>